<feature type="chain" id="PRO_0000437849" description="Heavy metal-associated isoprenylated plant protein 36">
    <location>
        <begin position="1"/>
        <end position="349"/>
    </location>
</feature>
<feature type="propeptide" id="PRO_0000437850" description="Removed in mature form" evidence="7">
    <location>
        <begin position="350"/>
        <end position="352"/>
    </location>
</feature>
<feature type="domain" description="HMA" evidence="3">
    <location>
        <begin position="29"/>
        <end position="92"/>
    </location>
</feature>
<feature type="region of interest" description="Disordered" evidence="4">
    <location>
        <begin position="96"/>
        <end position="150"/>
    </location>
</feature>
<feature type="region of interest" description="Disordered" evidence="4">
    <location>
        <begin position="162"/>
        <end position="211"/>
    </location>
</feature>
<feature type="region of interest" description="Disordered" evidence="4">
    <location>
        <begin position="229"/>
        <end position="252"/>
    </location>
</feature>
<feature type="compositionally biased region" description="Polar residues" evidence="4">
    <location>
        <begin position="97"/>
        <end position="107"/>
    </location>
</feature>
<feature type="compositionally biased region" description="Acidic residues" evidence="4">
    <location>
        <begin position="118"/>
        <end position="128"/>
    </location>
</feature>
<feature type="compositionally biased region" description="Gly residues" evidence="4">
    <location>
        <begin position="133"/>
        <end position="148"/>
    </location>
</feature>
<feature type="compositionally biased region" description="Basic residues" evidence="4">
    <location>
        <begin position="172"/>
        <end position="183"/>
    </location>
</feature>
<feature type="compositionally biased region" description="Gly residues" evidence="4">
    <location>
        <begin position="192"/>
        <end position="203"/>
    </location>
</feature>
<feature type="binding site" evidence="3">
    <location>
        <position position="40"/>
    </location>
    <ligand>
        <name>a metal cation</name>
        <dbReference type="ChEBI" id="CHEBI:25213"/>
    </ligand>
</feature>
<feature type="binding site" evidence="3">
    <location>
        <position position="43"/>
    </location>
    <ligand>
        <name>a metal cation</name>
        <dbReference type="ChEBI" id="CHEBI:25213"/>
    </ligand>
</feature>
<feature type="modified residue" description="Cysteine methyl ester" evidence="2">
    <location>
        <position position="349"/>
    </location>
</feature>
<feature type="lipid moiety-binding region" description="S-farnesyl cysteine" evidence="2">
    <location>
        <position position="349"/>
    </location>
</feature>
<keyword id="KW-0449">Lipoprotein</keyword>
<keyword id="KW-0479">Metal-binding</keyword>
<keyword id="KW-0488">Methylation</keyword>
<keyword id="KW-0636">Prenylation</keyword>
<keyword id="KW-1185">Reference proteome</keyword>
<reference key="1">
    <citation type="journal article" date="2000" name="Nature">
        <title>Sequence and analysis of chromosome 5 of the plant Arabidopsis thaliana.</title>
        <authorList>
            <person name="Tabata S."/>
            <person name="Kaneko T."/>
            <person name="Nakamura Y."/>
            <person name="Kotani H."/>
            <person name="Kato T."/>
            <person name="Asamizu E."/>
            <person name="Miyajima N."/>
            <person name="Sasamoto S."/>
            <person name="Kimura T."/>
            <person name="Hosouchi T."/>
            <person name="Kawashima K."/>
            <person name="Kohara M."/>
            <person name="Matsumoto M."/>
            <person name="Matsuno A."/>
            <person name="Muraki A."/>
            <person name="Nakayama S."/>
            <person name="Nakazaki N."/>
            <person name="Naruo K."/>
            <person name="Okumura S."/>
            <person name="Shinpo S."/>
            <person name="Takeuchi C."/>
            <person name="Wada T."/>
            <person name="Watanabe A."/>
            <person name="Yamada M."/>
            <person name="Yasuda M."/>
            <person name="Sato S."/>
            <person name="de la Bastide M."/>
            <person name="Huang E."/>
            <person name="Spiegel L."/>
            <person name="Gnoj L."/>
            <person name="O'Shaughnessy A."/>
            <person name="Preston R."/>
            <person name="Habermann K."/>
            <person name="Murray J."/>
            <person name="Johnson D."/>
            <person name="Rohlfing T."/>
            <person name="Nelson J."/>
            <person name="Stoneking T."/>
            <person name="Pepin K."/>
            <person name="Spieth J."/>
            <person name="Sekhon M."/>
            <person name="Armstrong J."/>
            <person name="Becker M."/>
            <person name="Belter E."/>
            <person name="Cordum H."/>
            <person name="Cordes M."/>
            <person name="Courtney L."/>
            <person name="Courtney W."/>
            <person name="Dante M."/>
            <person name="Du H."/>
            <person name="Edwards J."/>
            <person name="Fryman J."/>
            <person name="Haakensen B."/>
            <person name="Lamar E."/>
            <person name="Latreille P."/>
            <person name="Leonard S."/>
            <person name="Meyer R."/>
            <person name="Mulvaney E."/>
            <person name="Ozersky P."/>
            <person name="Riley A."/>
            <person name="Strowmatt C."/>
            <person name="Wagner-McPherson C."/>
            <person name="Wollam A."/>
            <person name="Yoakum M."/>
            <person name="Bell M."/>
            <person name="Dedhia N."/>
            <person name="Parnell L."/>
            <person name="Shah R."/>
            <person name="Rodriguez M."/>
            <person name="Hoon See L."/>
            <person name="Vil D."/>
            <person name="Baker J."/>
            <person name="Kirchoff K."/>
            <person name="Toth K."/>
            <person name="King L."/>
            <person name="Bahret A."/>
            <person name="Miller B."/>
            <person name="Marra M.A."/>
            <person name="Martienssen R."/>
            <person name="McCombie W.R."/>
            <person name="Wilson R.K."/>
            <person name="Murphy G."/>
            <person name="Bancroft I."/>
            <person name="Volckaert G."/>
            <person name="Wambutt R."/>
            <person name="Duesterhoeft A."/>
            <person name="Stiekema W."/>
            <person name="Pohl T."/>
            <person name="Entian K.-D."/>
            <person name="Terryn N."/>
            <person name="Hartley N."/>
            <person name="Bent E."/>
            <person name="Johnson S."/>
            <person name="Langham S.-A."/>
            <person name="McCullagh B."/>
            <person name="Robben J."/>
            <person name="Grymonprez B."/>
            <person name="Zimmermann W."/>
            <person name="Ramsperger U."/>
            <person name="Wedler H."/>
            <person name="Balke K."/>
            <person name="Wedler E."/>
            <person name="Peters S."/>
            <person name="van Staveren M."/>
            <person name="Dirkse W."/>
            <person name="Mooijman P."/>
            <person name="Klein Lankhorst R."/>
            <person name="Weitzenegger T."/>
            <person name="Bothe G."/>
            <person name="Rose M."/>
            <person name="Hauf J."/>
            <person name="Berneiser S."/>
            <person name="Hempel S."/>
            <person name="Feldpausch M."/>
            <person name="Lamberth S."/>
            <person name="Villarroel R."/>
            <person name="Gielen J."/>
            <person name="Ardiles W."/>
            <person name="Bents O."/>
            <person name="Lemcke K."/>
            <person name="Kolesov G."/>
            <person name="Mayer K.F.X."/>
            <person name="Rudd S."/>
            <person name="Schoof H."/>
            <person name="Schueller C."/>
            <person name="Zaccaria P."/>
            <person name="Mewes H.-W."/>
            <person name="Bevan M."/>
            <person name="Fransz P.F."/>
        </authorList>
    </citation>
    <scope>NUCLEOTIDE SEQUENCE [LARGE SCALE GENOMIC DNA]</scope>
    <source>
        <strain>cv. Columbia</strain>
    </source>
</reference>
<reference key="2">
    <citation type="journal article" date="2017" name="Plant J.">
        <title>Araport11: a complete reannotation of the Arabidopsis thaliana reference genome.</title>
        <authorList>
            <person name="Cheng C.Y."/>
            <person name="Krishnakumar V."/>
            <person name="Chan A.P."/>
            <person name="Thibaud-Nissen F."/>
            <person name="Schobel S."/>
            <person name="Town C.D."/>
        </authorList>
    </citation>
    <scope>GENOME REANNOTATION</scope>
    <source>
        <strain>cv. Columbia</strain>
    </source>
</reference>
<reference key="3">
    <citation type="journal article" date="2003" name="Science">
        <title>Empirical analysis of transcriptional activity in the Arabidopsis genome.</title>
        <authorList>
            <person name="Yamada K."/>
            <person name="Lim J."/>
            <person name="Dale J.M."/>
            <person name="Chen H."/>
            <person name="Shinn P."/>
            <person name="Palm C.J."/>
            <person name="Southwick A.M."/>
            <person name="Wu H.C."/>
            <person name="Kim C.J."/>
            <person name="Nguyen M."/>
            <person name="Pham P.K."/>
            <person name="Cheuk R.F."/>
            <person name="Karlin-Newmann G."/>
            <person name="Liu S.X."/>
            <person name="Lam B."/>
            <person name="Sakano H."/>
            <person name="Wu T."/>
            <person name="Yu G."/>
            <person name="Miranda M."/>
            <person name="Quach H.L."/>
            <person name="Tripp M."/>
            <person name="Chang C.H."/>
            <person name="Lee J.M."/>
            <person name="Toriumi M.J."/>
            <person name="Chan M.M."/>
            <person name="Tang C.C."/>
            <person name="Onodera C.S."/>
            <person name="Deng J.M."/>
            <person name="Akiyama K."/>
            <person name="Ansari Y."/>
            <person name="Arakawa T."/>
            <person name="Banh J."/>
            <person name="Banno F."/>
            <person name="Bowser L."/>
            <person name="Brooks S.Y."/>
            <person name="Carninci P."/>
            <person name="Chao Q."/>
            <person name="Choy N."/>
            <person name="Enju A."/>
            <person name="Goldsmith A.D."/>
            <person name="Gurjal M."/>
            <person name="Hansen N.F."/>
            <person name="Hayashizaki Y."/>
            <person name="Johnson-Hopson C."/>
            <person name="Hsuan V.W."/>
            <person name="Iida K."/>
            <person name="Karnes M."/>
            <person name="Khan S."/>
            <person name="Koesema E."/>
            <person name="Ishida J."/>
            <person name="Jiang P.X."/>
            <person name="Jones T."/>
            <person name="Kawai J."/>
            <person name="Kamiya A."/>
            <person name="Meyers C."/>
            <person name="Nakajima M."/>
            <person name="Narusaka M."/>
            <person name="Seki M."/>
            <person name="Sakurai T."/>
            <person name="Satou M."/>
            <person name="Tamse R."/>
            <person name="Vaysberg M."/>
            <person name="Wallender E.K."/>
            <person name="Wong C."/>
            <person name="Yamamura Y."/>
            <person name="Yuan S."/>
            <person name="Shinozaki K."/>
            <person name="Davis R.W."/>
            <person name="Theologis A."/>
            <person name="Ecker J.R."/>
        </authorList>
    </citation>
    <scope>NUCLEOTIDE SEQUENCE [LARGE SCALE MRNA]</scope>
    <source>
        <strain>cv. Columbia</strain>
    </source>
</reference>
<reference key="4">
    <citation type="journal article" date="2010" name="Metallomics">
        <title>Metallochaperone-like genes in Arabidopsis thaliana.</title>
        <authorList>
            <person name="Tehseen M."/>
            <person name="Cairns N."/>
            <person name="Sherson S."/>
            <person name="Cobbett C.S."/>
        </authorList>
    </citation>
    <scope>GENE FAMILY</scope>
    <scope>NOMENCLATURE</scope>
</reference>
<reference key="5">
    <citation type="journal article" date="2013" name="FEBS J.">
        <title>Heavy metal-associated isoprenylated plant protein (HIPP): characterization of a family of proteins exclusive to plants.</title>
        <authorList>
            <person name="de Abreu-Neto J.B."/>
            <person name="Turchetto-Zolet A.C."/>
            <person name="de Oliveira L.F."/>
            <person name="Zanettini M.H."/>
            <person name="Margis-Pinheiro M."/>
        </authorList>
    </citation>
    <scope>GENE FAMILY</scope>
    <scope>NOMENCLATURE</scope>
</reference>
<evidence type="ECO:0000250" key="1">
    <source>
        <dbReference type="UniProtKB" id="Q9LZF1"/>
    </source>
</evidence>
<evidence type="ECO:0000250" key="2">
    <source>
        <dbReference type="UniProtKB" id="Q9SZN7"/>
    </source>
</evidence>
<evidence type="ECO:0000255" key="3">
    <source>
        <dbReference type="PROSITE-ProRule" id="PRU00280"/>
    </source>
</evidence>
<evidence type="ECO:0000256" key="4">
    <source>
        <dbReference type="SAM" id="MobiDB-lite"/>
    </source>
</evidence>
<evidence type="ECO:0000303" key="5">
    <source>
    </source>
</evidence>
<evidence type="ECO:0000303" key="6">
    <source>
    </source>
</evidence>
<evidence type="ECO:0000305" key="7"/>
<evidence type="ECO:0000312" key="8">
    <source>
        <dbReference type="Araport" id="AT5G27690"/>
    </source>
</evidence>
<evidence type="ECO:0000312" key="9">
    <source>
        <dbReference type="EMBL" id="AAO41922.1"/>
    </source>
</evidence>
<evidence type="ECO:0000312" key="10">
    <source>
        <dbReference type="EMBL" id="AC069556"/>
    </source>
</evidence>
<proteinExistence type="evidence at protein level"/>
<comment type="function">
    <text evidence="1">Heavy-metal-binding protein.</text>
</comment>
<comment type="interaction">
    <interactant intactId="EBI-4458346">
        <id>Q84J88</id>
    </interactant>
    <interactant intactId="EBI-4446992">
        <id>O81313</id>
        <label>IND</label>
    </interactant>
    <organismsDiffer>false</organismsDiffer>
    <experiments>3</experiments>
</comment>
<comment type="similarity">
    <text evidence="7">Belongs to the HIPP family.</text>
</comment>
<protein>
    <recommendedName>
        <fullName evidence="5 6">Heavy metal-associated isoprenylated plant protein 36</fullName>
        <shortName evidence="5 6">AtHIP36</shortName>
    </recommendedName>
</protein>
<gene>
    <name evidence="5 6" type="primary">HIPP36</name>
    <name evidence="8" type="ordered locus">At5g27690</name>
    <name evidence="10" type="ORF">T1G16.20</name>
</gene>
<name>HIP36_ARATH</name>
<accession>Q84J88</accession>
<sequence length="352" mass="38701">MDLGTEIKSDTRQEEQRHVFEDYPEPLRYTTWVLRVSIHCEGCKRKIKKILSKIDGVYTTNIDVKQQKVTVIGNVEPEILIKKIMKAGRHAELWPTSMENNINNDCNYQKKPKKDNEETSGDEDDDENNNNNNGGGDVGGGGGGGGGNFDQVKQVVTFVNGQLQPQGDGAPKKKKKKKKKKKSLGNTTVVMEGGGGGGGGGGPPQNDGPPETVIYSAPQDHHIIHGPPPHLHHHQQQNHPYPTVHSPPRHHPQQMYGPGPGLPPPSFYHTQPQTAPSYTVSYNTVHGPINNGGNETASYYTAPPSHPTSYYSYEYVDTGYESPPPEFYSYRSQPSESFESLSEGNPNSCCVM</sequence>
<dbReference type="EMBL" id="AC069556">
    <property type="status" value="NOT_ANNOTATED_CDS"/>
    <property type="molecule type" value="Genomic_DNA"/>
</dbReference>
<dbReference type="EMBL" id="CP002688">
    <property type="protein sequence ID" value="AED93715.1"/>
    <property type="molecule type" value="Genomic_DNA"/>
</dbReference>
<dbReference type="EMBL" id="BT003873">
    <property type="protein sequence ID" value="AAO41922.1"/>
    <property type="molecule type" value="mRNA"/>
</dbReference>
<dbReference type="EMBL" id="BT005500">
    <property type="protein sequence ID" value="AAO63920.1"/>
    <property type="molecule type" value="mRNA"/>
</dbReference>
<dbReference type="RefSeq" id="NP_198121.1">
    <property type="nucleotide sequence ID" value="NM_122651.3"/>
</dbReference>
<dbReference type="SMR" id="Q84J88"/>
<dbReference type="FunCoup" id="Q84J88">
    <property type="interactions" value="42"/>
</dbReference>
<dbReference type="IntAct" id="Q84J88">
    <property type="interactions" value="2"/>
</dbReference>
<dbReference type="STRING" id="3702.Q84J88"/>
<dbReference type="PaxDb" id="3702-AT5G27690.1"/>
<dbReference type="ProteomicsDB" id="230323"/>
<dbReference type="EnsemblPlants" id="AT5G27690.1">
    <property type="protein sequence ID" value="AT5G27690.1"/>
    <property type="gene ID" value="AT5G27690"/>
</dbReference>
<dbReference type="GeneID" id="832831"/>
<dbReference type="Gramene" id="AT5G27690.1">
    <property type="protein sequence ID" value="AT5G27690.1"/>
    <property type="gene ID" value="AT5G27690"/>
</dbReference>
<dbReference type="KEGG" id="ath:AT5G27690"/>
<dbReference type="Araport" id="AT5G27690"/>
<dbReference type="TAIR" id="AT5G27690"/>
<dbReference type="eggNOG" id="KOG1603">
    <property type="taxonomic scope" value="Eukaryota"/>
</dbReference>
<dbReference type="HOGENOM" id="CLU_042477_1_0_1"/>
<dbReference type="InParanoid" id="Q84J88"/>
<dbReference type="OMA" id="LWPTSME"/>
<dbReference type="PRO" id="PR:Q84J88"/>
<dbReference type="Proteomes" id="UP000006548">
    <property type="component" value="Chromosome 5"/>
</dbReference>
<dbReference type="ExpressionAtlas" id="Q84J88">
    <property type="expression patterns" value="baseline and differential"/>
</dbReference>
<dbReference type="GO" id="GO:0046872">
    <property type="term" value="F:metal ion binding"/>
    <property type="evidence" value="ECO:0007669"/>
    <property type="project" value="UniProtKB-KW"/>
</dbReference>
<dbReference type="CDD" id="cd00371">
    <property type="entry name" value="HMA"/>
    <property type="match status" value="1"/>
</dbReference>
<dbReference type="FunFam" id="3.30.70.100:FF:000008">
    <property type="entry name" value="Copper transport protein ATOX1"/>
    <property type="match status" value="1"/>
</dbReference>
<dbReference type="Gene3D" id="3.30.70.100">
    <property type="match status" value="1"/>
</dbReference>
<dbReference type="InterPro" id="IPR006121">
    <property type="entry name" value="HMA_dom"/>
</dbReference>
<dbReference type="InterPro" id="IPR036163">
    <property type="entry name" value="HMA_dom_sf"/>
</dbReference>
<dbReference type="PANTHER" id="PTHR45868:SF80">
    <property type="entry name" value="F15K9.8-RELATED"/>
    <property type="match status" value="1"/>
</dbReference>
<dbReference type="PANTHER" id="PTHR45868">
    <property type="entry name" value="HEAVY METAL-ASSOCIATED ISOPRENYLATED PLANT PROTEIN 33-RELATED"/>
    <property type="match status" value="1"/>
</dbReference>
<dbReference type="Pfam" id="PF00403">
    <property type="entry name" value="HMA"/>
    <property type="match status" value="1"/>
</dbReference>
<dbReference type="SUPFAM" id="SSF55008">
    <property type="entry name" value="HMA, heavy metal-associated domain"/>
    <property type="match status" value="1"/>
</dbReference>
<dbReference type="PROSITE" id="PS50846">
    <property type="entry name" value="HMA_2"/>
    <property type="match status" value="1"/>
</dbReference>
<organism evidence="9">
    <name type="scientific">Arabidopsis thaliana</name>
    <name type="common">Mouse-ear cress</name>
    <dbReference type="NCBI Taxonomy" id="3702"/>
    <lineage>
        <taxon>Eukaryota</taxon>
        <taxon>Viridiplantae</taxon>
        <taxon>Streptophyta</taxon>
        <taxon>Embryophyta</taxon>
        <taxon>Tracheophyta</taxon>
        <taxon>Spermatophyta</taxon>
        <taxon>Magnoliopsida</taxon>
        <taxon>eudicotyledons</taxon>
        <taxon>Gunneridae</taxon>
        <taxon>Pentapetalae</taxon>
        <taxon>rosids</taxon>
        <taxon>malvids</taxon>
        <taxon>Brassicales</taxon>
        <taxon>Brassicaceae</taxon>
        <taxon>Camelineae</taxon>
        <taxon>Arabidopsis</taxon>
    </lineage>
</organism>